<protein>
    <recommendedName>
        <fullName evidence="1">Mannonate dehydratase</fullName>
        <ecNumber evidence="1">4.2.1.8</ecNumber>
    </recommendedName>
    <alternativeName>
        <fullName evidence="1">D-mannonate hydro-lyase</fullName>
    </alternativeName>
</protein>
<accession>Q8XEG9</accession>
<gene>
    <name evidence="1" type="primary">uxuA</name>
    <name type="ordered locus">Z5920</name>
    <name type="ordered locus">ECs5281</name>
</gene>
<name>UXUA_ECO57</name>
<proteinExistence type="inferred from homology"/>
<feature type="chain" id="PRO_0000170672" description="Mannonate dehydratase">
    <location>
        <begin position="1"/>
        <end position="394"/>
    </location>
</feature>
<feature type="sequence conflict" description="In Ref. 2; BAB38704." evidence="2" ref="2">
    <original>S</original>
    <variation>T</variation>
    <location>
        <position position="269"/>
    </location>
</feature>
<feature type="sequence conflict" description="In Ref. 2; BAB38704." evidence="2" ref="2">
    <original>Y</original>
    <variation>N</variation>
    <location>
        <position position="281"/>
    </location>
</feature>
<sequence length="394" mass="44840">MEQTWRWYGPNDPVSLADVRQAGATGVVTALHHIPNGEVWSVEEILKRKAIVEDAGLVWSVVESVPIHEDIKTHTGNYEQWIANYQQTLRNLAQCGIRTVCYNFMPVLDWTRTDLEYVLPDGSKALRFDQIEFAAFEMHILKRPGAEADYTEEEIAQAAERFATMSDEDKARLTRNIIAGLPGAEEGYTLDQFRKHLELYKDIDKAKLRENFAVFLKAIIPVAEEVGVRMAVHPDDPPRPILGLPRIVSTIEDMQWMVDTVNSMANGFSMCTGSYGVRADYDLVDMIKQFGPRIYFTHLRSTMREDNPKTFHEAAHLNGDVDMYEVVKAIVEEEHRRKAEGKEDLIPMRPDHGHQMLDDLKKKTNPGYSAIGRLKGLAEVRGVELAIQRAFFSH</sequence>
<reference key="1">
    <citation type="journal article" date="2001" name="Nature">
        <title>Genome sequence of enterohaemorrhagic Escherichia coli O157:H7.</title>
        <authorList>
            <person name="Perna N.T."/>
            <person name="Plunkett G. III"/>
            <person name="Burland V."/>
            <person name="Mau B."/>
            <person name="Glasner J.D."/>
            <person name="Rose D.J."/>
            <person name="Mayhew G.F."/>
            <person name="Evans P.S."/>
            <person name="Gregor J."/>
            <person name="Kirkpatrick H.A."/>
            <person name="Posfai G."/>
            <person name="Hackett J."/>
            <person name="Klink S."/>
            <person name="Boutin A."/>
            <person name="Shao Y."/>
            <person name="Miller L."/>
            <person name="Grotbeck E.J."/>
            <person name="Davis N.W."/>
            <person name="Lim A."/>
            <person name="Dimalanta E.T."/>
            <person name="Potamousis K."/>
            <person name="Apodaca J."/>
            <person name="Anantharaman T.S."/>
            <person name="Lin J."/>
            <person name="Yen G."/>
            <person name="Schwartz D.C."/>
            <person name="Welch R.A."/>
            <person name="Blattner F.R."/>
        </authorList>
    </citation>
    <scope>NUCLEOTIDE SEQUENCE [LARGE SCALE GENOMIC DNA]</scope>
    <source>
        <strain>O157:H7 / EDL933 / ATCC 700927 / EHEC</strain>
    </source>
</reference>
<reference key="2">
    <citation type="journal article" date="2001" name="DNA Res.">
        <title>Complete genome sequence of enterohemorrhagic Escherichia coli O157:H7 and genomic comparison with a laboratory strain K-12.</title>
        <authorList>
            <person name="Hayashi T."/>
            <person name="Makino K."/>
            <person name="Ohnishi M."/>
            <person name="Kurokawa K."/>
            <person name="Ishii K."/>
            <person name="Yokoyama K."/>
            <person name="Han C.-G."/>
            <person name="Ohtsubo E."/>
            <person name="Nakayama K."/>
            <person name="Murata T."/>
            <person name="Tanaka M."/>
            <person name="Tobe T."/>
            <person name="Iida T."/>
            <person name="Takami H."/>
            <person name="Honda T."/>
            <person name="Sasakawa C."/>
            <person name="Ogasawara N."/>
            <person name="Yasunaga T."/>
            <person name="Kuhara S."/>
            <person name="Shiba T."/>
            <person name="Hattori M."/>
            <person name="Shinagawa H."/>
        </authorList>
    </citation>
    <scope>NUCLEOTIDE SEQUENCE [LARGE SCALE GENOMIC DNA]</scope>
    <source>
        <strain>O157:H7 / Sakai / RIMD 0509952 / EHEC</strain>
    </source>
</reference>
<keyword id="KW-0408">Iron</keyword>
<keyword id="KW-0456">Lyase</keyword>
<keyword id="KW-0464">Manganese</keyword>
<keyword id="KW-1185">Reference proteome</keyword>
<comment type="function">
    <text evidence="1">Catalyzes the dehydration of D-mannonate.</text>
</comment>
<comment type="catalytic activity">
    <reaction evidence="1">
        <text>D-mannonate = 2-dehydro-3-deoxy-D-gluconate + H2O</text>
        <dbReference type="Rhea" id="RHEA:20097"/>
        <dbReference type="ChEBI" id="CHEBI:15377"/>
        <dbReference type="ChEBI" id="CHEBI:17767"/>
        <dbReference type="ChEBI" id="CHEBI:57990"/>
        <dbReference type="EC" id="4.2.1.8"/>
    </reaction>
</comment>
<comment type="cofactor">
    <cofactor evidence="1">
        <name>Fe(2+)</name>
        <dbReference type="ChEBI" id="CHEBI:29033"/>
    </cofactor>
    <cofactor evidence="1">
        <name>Mn(2+)</name>
        <dbReference type="ChEBI" id="CHEBI:29035"/>
    </cofactor>
</comment>
<comment type="pathway">
    <text evidence="1">Carbohydrate metabolism; pentose and glucuronate interconversion.</text>
</comment>
<comment type="similarity">
    <text evidence="1">Belongs to the mannonate dehydratase family.</text>
</comment>
<organism>
    <name type="scientific">Escherichia coli O157:H7</name>
    <dbReference type="NCBI Taxonomy" id="83334"/>
    <lineage>
        <taxon>Bacteria</taxon>
        <taxon>Pseudomonadati</taxon>
        <taxon>Pseudomonadota</taxon>
        <taxon>Gammaproteobacteria</taxon>
        <taxon>Enterobacterales</taxon>
        <taxon>Enterobacteriaceae</taxon>
        <taxon>Escherichia</taxon>
    </lineage>
</organism>
<dbReference type="EC" id="4.2.1.8" evidence="1"/>
<dbReference type="EMBL" id="AE005174">
    <property type="protein sequence ID" value="AAG59504.1"/>
    <property type="molecule type" value="Genomic_DNA"/>
</dbReference>
<dbReference type="EMBL" id="BA000007">
    <property type="protein sequence ID" value="BAB38704.1"/>
    <property type="molecule type" value="Genomic_DNA"/>
</dbReference>
<dbReference type="PIR" id="A91289">
    <property type="entry name" value="A91289"/>
</dbReference>
<dbReference type="PIR" id="D86130">
    <property type="entry name" value="D86130"/>
</dbReference>
<dbReference type="RefSeq" id="NP_313308.1">
    <property type="nucleotide sequence ID" value="NC_002695.1"/>
</dbReference>
<dbReference type="SMR" id="Q8XEG9"/>
<dbReference type="STRING" id="155864.Z5920"/>
<dbReference type="GeneID" id="913672"/>
<dbReference type="KEGG" id="ece:Z5920"/>
<dbReference type="KEGG" id="ecs:ECs_5281"/>
<dbReference type="PATRIC" id="fig|386585.9.peg.5518"/>
<dbReference type="eggNOG" id="COG1312">
    <property type="taxonomic scope" value="Bacteria"/>
</dbReference>
<dbReference type="HOGENOM" id="CLU_058621_2_0_6"/>
<dbReference type="UniPathway" id="UPA00246"/>
<dbReference type="Proteomes" id="UP000000558">
    <property type="component" value="Chromosome"/>
</dbReference>
<dbReference type="Proteomes" id="UP000002519">
    <property type="component" value="Chromosome"/>
</dbReference>
<dbReference type="GO" id="GO:0008198">
    <property type="term" value="F:ferrous iron binding"/>
    <property type="evidence" value="ECO:0007669"/>
    <property type="project" value="TreeGrafter"/>
</dbReference>
<dbReference type="GO" id="GO:0030145">
    <property type="term" value="F:manganese ion binding"/>
    <property type="evidence" value="ECO:0007669"/>
    <property type="project" value="TreeGrafter"/>
</dbReference>
<dbReference type="GO" id="GO:0008927">
    <property type="term" value="F:mannonate dehydratase activity"/>
    <property type="evidence" value="ECO:0007669"/>
    <property type="project" value="UniProtKB-UniRule"/>
</dbReference>
<dbReference type="GO" id="GO:0042840">
    <property type="term" value="P:D-glucuronate catabolic process"/>
    <property type="evidence" value="ECO:0007669"/>
    <property type="project" value="TreeGrafter"/>
</dbReference>
<dbReference type="FunFam" id="3.20.20.150:FF:000004">
    <property type="entry name" value="Mannonate dehydratase"/>
    <property type="match status" value="1"/>
</dbReference>
<dbReference type="FunFam" id="3.20.20.150:FF:000005">
    <property type="entry name" value="Mannonate dehydratase"/>
    <property type="match status" value="1"/>
</dbReference>
<dbReference type="Gene3D" id="3.20.20.150">
    <property type="entry name" value="Divalent-metal-dependent TIM barrel enzymes"/>
    <property type="match status" value="2"/>
</dbReference>
<dbReference type="HAMAP" id="MF_00106">
    <property type="entry name" value="UxuA"/>
    <property type="match status" value="1"/>
</dbReference>
<dbReference type="InterPro" id="IPR004628">
    <property type="entry name" value="Man_deHydtase"/>
</dbReference>
<dbReference type="InterPro" id="IPR036237">
    <property type="entry name" value="Xyl_isomerase-like_sf"/>
</dbReference>
<dbReference type="NCBIfam" id="NF003027">
    <property type="entry name" value="PRK03906.1"/>
    <property type="match status" value="1"/>
</dbReference>
<dbReference type="NCBIfam" id="TIGR00695">
    <property type="entry name" value="uxuA"/>
    <property type="match status" value="1"/>
</dbReference>
<dbReference type="PANTHER" id="PTHR30387">
    <property type="entry name" value="MANNONATE DEHYDRATASE"/>
    <property type="match status" value="1"/>
</dbReference>
<dbReference type="PANTHER" id="PTHR30387:SF2">
    <property type="entry name" value="MANNONATE DEHYDRATASE"/>
    <property type="match status" value="1"/>
</dbReference>
<dbReference type="Pfam" id="PF03786">
    <property type="entry name" value="UxuA"/>
    <property type="match status" value="1"/>
</dbReference>
<dbReference type="PIRSF" id="PIRSF016049">
    <property type="entry name" value="Man_dehyd"/>
    <property type="match status" value="1"/>
</dbReference>
<dbReference type="SUPFAM" id="SSF51658">
    <property type="entry name" value="Xylose isomerase-like"/>
    <property type="match status" value="1"/>
</dbReference>
<evidence type="ECO:0000255" key="1">
    <source>
        <dbReference type="HAMAP-Rule" id="MF_00106"/>
    </source>
</evidence>
<evidence type="ECO:0000305" key="2"/>